<proteinExistence type="inferred from homology"/>
<comment type="function">
    <text evidence="1">Catalyzes the methylation of C-1 in cobalt-precorrin-5B to form cobalt-precorrin-6A.</text>
</comment>
<comment type="catalytic activity">
    <reaction evidence="1">
        <text>Co-precorrin-5B + S-adenosyl-L-methionine = Co-precorrin-6A + S-adenosyl-L-homocysteine</text>
        <dbReference type="Rhea" id="RHEA:26285"/>
        <dbReference type="ChEBI" id="CHEBI:57856"/>
        <dbReference type="ChEBI" id="CHEBI:59789"/>
        <dbReference type="ChEBI" id="CHEBI:60063"/>
        <dbReference type="ChEBI" id="CHEBI:60064"/>
        <dbReference type="EC" id="2.1.1.195"/>
    </reaction>
</comment>
<comment type="pathway">
    <text evidence="1">Cofactor biosynthesis; adenosylcobalamin biosynthesis; cob(II)yrinate a,c-diamide from sirohydrochlorin (anaerobic route): step 6/10.</text>
</comment>
<comment type="similarity">
    <text evidence="1">Belongs to the CbiD family.</text>
</comment>
<sequence length="355" mass="37947">MPVWVASAARAALRALLGHPFEPNQQVVQPDGGEPLLVPVRSAARLSDDQALAISRCDPGPGLDLTRDLEIWVRVAWTPSADQGLVLMPGEGVGRIGAGGDACLSTYARQLLECTLLPLLPPGQGLEVEPVLPRGRSLAERTSNAAFGVVDGLALIGTQAEVQQSAAPEQLEQVLRELRALVADPGFGGSVALVIGENGLDLARRAGLSPLLKVGNWLGPVLVAAAEAGVKDLLLLGYHGKLIKLAGGIFHTHHHLADGRLEVLTALGLDVGLSLEELRHLRAAASVEDAFQRLNPETAMDLGRLLAATVEQRSQAYIARYGDWSLRIAAVLFDRSRTLRWRGPMAEERFFTLQD</sequence>
<reference key="1">
    <citation type="journal article" date="2003" name="Nature">
        <title>The genome of a motile marine Synechococcus.</title>
        <authorList>
            <person name="Palenik B."/>
            <person name="Brahamsha B."/>
            <person name="Larimer F.W."/>
            <person name="Land M.L."/>
            <person name="Hauser L."/>
            <person name="Chain P."/>
            <person name="Lamerdin J.E."/>
            <person name="Regala W."/>
            <person name="Allen E.E."/>
            <person name="McCarren J."/>
            <person name="Paulsen I.T."/>
            <person name="Dufresne A."/>
            <person name="Partensky F."/>
            <person name="Webb E.A."/>
            <person name="Waterbury J."/>
        </authorList>
    </citation>
    <scope>NUCLEOTIDE SEQUENCE [LARGE SCALE GENOMIC DNA]</scope>
    <source>
        <strain>WH8102</strain>
    </source>
</reference>
<dbReference type="EC" id="2.1.1.195" evidence="1"/>
<dbReference type="EMBL" id="BX569689">
    <property type="protein sequence ID" value="CAE06561.1"/>
    <property type="molecule type" value="Genomic_DNA"/>
</dbReference>
<dbReference type="STRING" id="84588.SYNW0046"/>
<dbReference type="KEGG" id="syw:SYNW0046"/>
<dbReference type="eggNOG" id="COG1903">
    <property type="taxonomic scope" value="Bacteria"/>
</dbReference>
<dbReference type="HOGENOM" id="CLU_041273_1_2_3"/>
<dbReference type="UniPathway" id="UPA00148">
    <property type="reaction ID" value="UER00227"/>
</dbReference>
<dbReference type="Proteomes" id="UP000001422">
    <property type="component" value="Chromosome"/>
</dbReference>
<dbReference type="GO" id="GO:0043780">
    <property type="term" value="F:cobalt-precorrin-5B C1-methyltransferase activity"/>
    <property type="evidence" value="ECO:0007669"/>
    <property type="project" value="RHEA"/>
</dbReference>
<dbReference type="GO" id="GO:0019251">
    <property type="term" value="P:anaerobic cobalamin biosynthetic process"/>
    <property type="evidence" value="ECO:0007669"/>
    <property type="project" value="UniProtKB-UniRule"/>
</dbReference>
<dbReference type="GO" id="GO:0032259">
    <property type="term" value="P:methylation"/>
    <property type="evidence" value="ECO:0007669"/>
    <property type="project" value="UniProtKB-KW"/>
</dbReference>
<dbReference type="Gene3D" id="3.30.2110.10">
    <property type="entry name" value="CbiD-like"/>
    <property type="match status" value="1"/>
</dbReference>
<dbReference type="HAMAP" id="MF_00787">
    <property type="entry name" value="CbiD"/>
    <property type="match status" value="1"/>
</dbReference>
<dbReference type="InterPro" id="IPR002748">
    <property type="entry name" value="CbiD"/>
</dbReference>
<dbReference type="InterPro" id="IPR036074">
    <property type="entry name" value="CbiD_sf"/>
</dbReference>
<dbReference type="NCBIfam" id="TIGR00312">
    <property type="entry name" value="cbiD"/>
    <property type="match status" value="1"/>
</dbReference>
<dbReference type="PANTHER" id="PTHR35863">
    <property type="entry name" value="COBALT-PRECORRIN-5B C(1)-METHYLTRANSFERASE"/>
    <property type="match status" value="1"/>
</dbReference>
<dbReference type="PANTHER" id="PTHR35863:SF1">
    <property type="entry name" value="COBALT-PRECORRIN-5B C(1)-METHYLTRANSFERASE"/>
    <property type="match status" value="1"/>
</dbReference>
<dbReference type="Pfam" id="PF01888">
    <property type="entry name" value="CbiD"/>
    <property type="match status" value="1"/>
</dbReference>
<dbReference type="PIRSF" id="PIRSF026782">
    <property type="entry name" value="CbiD"/>
    <property type="match status" value="1"/>
</dbReference>
<dbReference type="SUPFAM" id="SSF111342">
    <property type="entry name" value="CbiD-like"/>
    <property type="match status" value="1"/>
</dbReference>
<name>CBID_PARMW</name>
<protein>
    <recommendedName>
        <fullName evidence="1">Cobalt-precorrin-5B C(1)-methyltransferase</fullName>
        <ecNumber evidence="1">2.1.1.195</ecNumber>
    </recommendedName>
    <alternativeName>
        <fullName evidence="1">Cobalt-precorrin-6A synthase</fullName>
    </alternativeName>
</protein>
<evidence type="ECO:0000255" key="1">
    <source>
        <dbReference type="HAMAP-Rule" id="MF_00787"/>
    </source>
</evidence>
<organism>
    <name type="scientific">Parasynechococcus marenigrum (strain WH8102)</name>
    <dbReference type="NCBI Taxonomy" id="84588"/>
    <lineage>
        <taxon>Bacteria</taxon>
        <taxon>Bacillati</taxon>
        <taxon>Cyanobacteriota</taxon>
        <taxon>Cyanophyceae</taxon>
        <taxon>Synechococcales</taxon>
        <taxon>Prochlorococcaceae</taxon>
        <taxon>Parasynechococcus</taxon>
        <taxon>Parasynechococcus marenigrum</taxon>
    </lineage>
</organism>
<accession>Q7UA54</accession>
<gene>
    <name evidence="1" type="primary">cbiD</name>
    <name type="ordered locus">SYNW0046</name>
</gene>
<keyword id="KW-0169">Cobalamin biosynthesis</keyword>
<keyword id="KW-0489">Methyltransferase</keyword>
<keyword id="KW-0949">S-adenosyl-L-methionine</keyword>
<keyword id="KW-0808">Transferase</keyword>
<feature type="chain" id="PRO_0000141686" description="Cobalt-precorrin-5B C(1)-methyltransferase">
    <location>
        <begin position="1"/>
        <end position="355"/>
    </location>
</feature>